<protein>
    <recommendedName>
        <fullName evidence="46">Histidine kinase 4</fullName>
        <ecNumber evidence="9">2.7.13.3</ecNumber>
    </recommendedName>
    <alternativeName>
        <fullName evidence="43 44">Arabidopsis histidine kinase 4</fullName>
        <shortName evidence="43 44">AtHK4</shortName>
    </alternativeName>
    <alternativeName>
        <fullName evidence="45">Cytokinin receptor CYTOKININ RESPONSE 1</fullName>
        <shortName evidence="45">AtCRE1</shortName>
        <shortName evidence="45">Cytokinin receptor CRE1</shortName>
    </alternativeName>
    <alternativeName>
        <fullName>Phosphoprotein phosphatase AHK4</fullName>
        <ecNumber>3.1.3.16</ecNumber>
    </alternativeName>
    <alternativeName>
        <fullName>Protein AUTHENTIC HIS-KINASE 4</fullName>
    </alternativeName>
    <alternativeName>
        <fullName>Protein ROOT AS IN WOL 1</fullName>
    </alternativeName>
    <alternativeName>
        <fullName evidence="42">Protein WOODEN LEG</fullName>
    </alternativeName>
</protein>
<keyword id="KW-0002">3D-structure</keyword>
<keyword id="KW-0025">Alternative splicing</keyword>
<keyword id="KW-0932">Cytokinin signaling pathway</keyword>
<keyword id="KW-0217">Developmental protein</keyword>
<keyword id="KW-0256">Endoplasmic reticulum</keyword>
<keyword id="KW-0378">Hydrolase</keyword>
<keyword id="KW-0418">Kinase</keyword>
<keyword id="KW-0472">Membrane</keyword>
<keyword id="KW-0597">Phosphoprotein</keyword>
<keyword id="KW-0904">Protein phosphatase</keyword>
<keyword id="KW-1185">Reference proteome</keyword>
<keyword id="KW-0808">Transferase</keyword>
<keyword id="KW-0812">Transmembrane</keyword>
<keyword id="KW-1133">Transmembrane helix</keyword>
<accession>Q9C5U0</accession>
<accession>A5YY60</accession>
<accession>A5YY75</accession>
<accession>Q9C5T8</accession>
<accession>Q9C5T9</accession>
<accession>Q9FDZ3</accession>
<accession>Q9SIT0</accession>
<reference key="1">
    <citation type="journal article" date="2000" name="Genes Dev.">
        <title>A novel two-component hybrid molecule regulates vascular morphogenesis of the Arabidopsis root.</title>
        <authorList>
            <person name="Maehoenen A.P."/>
            <person name="Bonke M."/>
            <person name="Kauppinen L."/>
            <person name="Riikonen M."/>
            <person name="Benfey P.N."/>
            <person name="Helariutta Y."/>
        </authorList>
    </citation>
    <scope>NUCLEOTIDE SEQUENCE [MRNA] (ISOFORM 2)</scope>
    <scope>TISSUE SPECIFICITY</scope>
    <scope>DEVELOPMENTAL STAGE</scope>
    <scope>FUNCTION</scope>
    <scope>MUTAGENESIS OF THR-301</scope>
    <source>
        <strain>cv. Columbia</strain>
        <tissue>Root</tissue>
    </source>
</reference>
<reference key="2">
    <citation type="journal article" date="2001" name="Nature">
        <title>Identification of CRE1 as a cytokinin receptor from Arabidopsis.</title>
        <authorList>
            <person name="Inoue T."/>
            <person name="Higuchi M."/>
            <person name="Hashimoto Y."/>
            <person name="Seki M."/>
            <person name="Kobayashi M."/>
            <person name="Kato T."/>
            <person name="Tabata S."/>
            <person name="Shinozaki K."/>
            <person name="Kakimoto T."/>
        </authorList>
    </citation>
    <scope>NUCLEOTIDE SEQUENCE [MRNA] (ISOFORMS 1 AND 2)</scope>
    <scope>FUNCTION</scope>
    <scope>ACTIVITY REGULATION</scope>
    <scope>MUTAGENESIS OF HIS-482; GLY-490 AND ASP-996</scope>
    <source>
        <strain>cv. Wassilewskija</strain>
        <tissue>Seedling</tissue>
    </source>
</reference>
<reference key="3">
    <citation type="journal article" date="2001" name="Plant Cell Physiol.">
        <title>Novel family of sensor histidine kinase genes in Arabidopsis thaliana.</title>
        <authorList>
            <person name="Ueguchi C."/>
            <person name="Koizumi H."/>
            <person name="Suzuki T."/>
            <person name="Mizuno T."/>
        </authorList>
    </citation>
    <scope>NUCLEOTIDE SEQUENCE [MRNA] (ISOFORM 2)</scope>
    <scope>TISSUE SPECIFICITY</scope>
</reference>
<reference key="4">
    <citation type="journal article" date="1999" name="Nature">
        <title>Sequence and analysis of chromosome 2 of the plant Arabidopsis thaliana.</title>
        <authorList>
            <person name="Lin X."/>
            <person name="Kaul S."/>
            <person name="Rounsley S.D."/>
            <person name="Shea T.P."/>
            <person name="Benito M.-I."/>
            <person name="Town C.D."/>
            <person name="Fujii C.Y."/>
            <person name="Mason T.M."/>
            <person name="Bowman C.L."/>
            <person name="Barnstead M.E."/>
            <person name="Feldblyum T.V."/>
            <person name="Buell C.R."/>
            <person name="Ketchum K.A."/>
            <person name="Lee J.J."/>
            <person name="Ronning C.M."/>
            <person name="Koo H.L."/>
            <person name="Moffat K.S."/>
            <person name="Cronin L.A."/>
            <person name="Shen M."/>
            <person name="Pai G."/>
            <person name="Van Aken S."/>
            <person name="Umayam L."/>
            <person name="Tallon L.J."/>
            <person name="Gill J.E."/>
            <person name="Adams M.D."/>
            <person name="Carrera A.J."/>
            <person name="Creasy T.H."/>
            <person name="Goodman H.M."/>
            <person name="Somerville C.R."/>
            <person name="Copenhaver G.P."/>
            <person name="Preuss D."/>
            <person name="Nierman W.C."/>
            <person name="White O."/>
            <person name="Eisen J.A."/>
            <person name="Salzberg S.L."/>
            <person name="Fraser C.M."/>
            <person name="Venter J.C."/>
        </authorList>
    </citation>
    <scope>NUCLEOTIDE SEQUENCE [LARGE SCALE GENOMIC DNA]</scope>
    <source>
        <strain>cv. Columbia</strain>
    </source>
</reference>
<reference key="5">
    <citation type="journal article" date="2017" name="Plant J.">
        <title>Araport11: a complete reannotation of the Arabidopsis thaliana reference genome.</title>
        <authorList>
            <person name="Cheng C.Y."/>
            <person name="Krishnakumar V."/>
            <person name="Chan A.P."/>
            <person name="Thibaud-Nissen F."/>
            <person name="Schobel S."/>
            <person name="Town C.D."/>
        </authorList>
    </citation>
    <scope>GENOME REANNOTATION</scope>
    <source>
        <strain>cv. Columbia</strain>
    </source>
</reference>
<reference key="6">
    <citation type="journal article" date="2007" name="Genetics">
        <title>The genetic architecture of shoot branching in Arabidopsis thaliana: a comparative assessment of candidate gene associations vs. quantitative trait locus mapping.</title>
        <authorList>
            <person name="Ehrenreich I.M."/>
            <person name="Stafford P.A."/>
            <person name="Purugganan M.D."/>
        </authorList>
    </citation>
    <scope>NUCLEOTIDE SEQUENCE [GENOMIC DNA] OF 722-983</scope>
    <scope>VARIANT ASN-765</scope>
    <source>
        <strain>cv. Ag-0</strain>
        <strain>cv. An-1</strain>
        <strain>cv. Br-0</strain>
        <strain>cv. C24</strain>
        <strain>cv. Ct-1</strain>
        <strain>cv. Cvi-1</strain>
        <strain>cv. Edi-0</strain>
        <strain>cv. Ga-0</strain>
        <strain>cv. Kas-2</strain>
        <strain>cv. Kin-0</strain>
        <strain>cv. Landsberg erecta</strain>
        <strain>cv. Ll-0</strain>
        <strain>cv. Lz-0</strain>
        <strain>cv. Ms-0</strain>
        <strain>cv. Mt-0</strain>
        <strain>cv. Nd-1</strain>
        <strain>cv. Nok-3</strain>
        <strain>cv. Oy-0</strain>
        <strain>cv. Se-0</strain>
        <strain>cv. Sorbo</strain>
        <strain>cv. Tsu-1</strain>
        <strain>cv. Van-0</strain>
        <strain>cv. Wa-1</strain>
        <strain>cv. Wassilewskija</strain>
    </source>
</reference>
<reference key="7">
    <citation type="journal article" date="2001" name="Plant Cell Physiol.">
        <title>The Arabidopsis sensor His-kinase, AHk4, can respond to cytokinins.</title>
        <authorList>
            <person name="Suzuki T."/>
            <person name="Miwa K."/>
            <person name="Ishikawa K."/>
            <person name="Yamada H."/>
            <person name="Aiba H."/>
            <person name="Mizuno T."/>
        </authorList>
    </citation>
    <scope>FUNCTION</scope>
    <scope>INTERACTION WITH AHP1; AHP2; AHP3 AND AHP5</scope>
</reference>
<reference key="8">
    <citation type="journal article" date="2001" name="Plant Cell Physiol.">
        <title>The AHK4 gene involved in the cytokinin-signaling pathway as a direct receptor molecule in Arabidopsis thaliana.</title>
        <authorList>
            <person name="Ueguchi C."/>
            <person name="Sato S."/>
            <person name="Kato T."/>
            <person name="Tabata S."/>
        </authorList>
    </citation>
    <scope>FUNCTION</scope>
    <scope>DISRUPTION PHENOTYPE</scope>
    <scope>CATALYTIC ACTIVITY</scope>
</reference>
<reference key="9">
    <citation type="journal article" date="2001" name="Plant Cell Physiol.">
        <title>The Arabidopsis AHK4 histidine kinase is a cytokinin-binding receptor that transduces cytokinin signals across the membrane.</title>
        <authorList>
            <person name="Yamada H."/>
            <person name="Suzuki T."/>
            <person name="Terada K."/>
            <person name="Takei K."/>
            <person name="Ishikawa K."/>
            <person name="Miwa K."/>
            <person name="Yamashino T."/>
            <person name="Mizuno T."/>
        </authorList>
    </citation>
    <scope>FUNCTION</scope>
    <scope>ACTIVATION BY CYTOKININS</scope>
    <scope>MUTAGENESIS OF THR-301</scope>
</reference>
<reference key="10">
    <citation type="journal article" date="2001" name="Trends Plant Sci.">
        <title>CREam of cytokinin signalling: receptor identified.</title>
        <authorList>
            <person name="Schmuelling T."/>
        </authorList>
    </citation>
    <scope>REVIEW</scope>
</reference>
<reference key="11">
    <citation type="journal article" date="2002" name="Genes Genet. Syst.">
        <title>His-Asp phosphorelay signal transduction in higher plants: receptors and response regulators for cytokinin signaling in Arabidopsis thaliana.</title>
        <authorList>
            <person name="Oka A."/>
            <person name="Sakai H."/>
            <person name="Iwakoshi S."/>
        </authorList>
    </citation>
    <scope>REVIEW</scope>
</reference>
<reference key="12">
    <citation type="journal article" date="2002" name="Plant Cell Physiol.">
        <title>Characterization of the ARR15 and ARR16 response regulators with special reference to the cytokinin signaling pathway mediated by the AHK4 histidine kinase in roots of Arabidopsis thaliana.</title>
        <authorList>
            <person name="Kiba T."/>
            <person name="Yamada H."/>
            <person name="Mizuno T."/>
        </authorList>
    </citation>
    <scope>FUNCTION</scope>
    <scope>MUTAGENESIS OF GLY-490</scope>
    <source>
        <strain>cv. Landsberg erecta</strain>
    </source>
</reference>
<reference key="13">
    <citation type="journal article" date="2002" name="Plant J.">
        <title>Mutations at CRE1 impair cytokinin-induced repression of phosphate starvation responses in Arabidopsis.</title>
        <authorList>
            <person name="Franco-Zorrilla J.M."/>
            <person name="Martin A.C."/>
            <person name="Solano R."/>
            <person name="Rubio V."/>
            <person name="Leyva A."/>
            <person name="Paz-Ares J."/>
        </authorList>
    </citation>
    <scope>FUNCTION</scope>
    <scope>DISRUPTION PHENOTYPE</scope>
    <scope>INDUCTION</scope>
    <scope>MUTAGENESIS OF GLY-493; THR-1008 AND ALA-1032</scope>
    <source>
        <strain>cv. Columbia</strain>
    </source>
</reference>
<reference key="14">
    <citation type="journal article" date="2002" name="Plant Physiol.">
        <title>Two-component signal transduction pathways in Arabidopsis.</title>
        <authorList>
            <person name="Hwang I."/>
            <person name="Chen H.-C."/>
            <person name="Sheen J."/>
        </authorList>
    </citation>
    <scope>GENE FAMILY</scope>
    <scope>NOMENCLATURE</scope>
</reference>
<reference key="15">
    <citation type="journal article" date="2004" name="Plant Cell">
        <title>Histidine kinase homologs that act as cytokinin receptors possess overlapping functions in the regulation of shoot and root growth in Arabidopsis.</title>
        <authorList>
            <person name="Nishimura C."/>
            <person name="Ohashi Y."/>
            <person name="Sato S."/>
            <person name="Kato T."/>
            <person name="Tabata S."/>
            <person name="Ueguchi C."/>
        </authorList>
    </citation>
    <scope>FUNCTION</scope>
    <scope>DISRUPTION PHENOTYPE</scope>
    <scope>TISSUE SPECIFICITY</scope>
    <scope>DEVELOPMENTAL STAGE</scope>
    <source>
        <strain>cv. Columbia</strain>
    </source>
</reference>
<reference key="16">
    <citation type="journal article" date="2004" name="Plant Cell Physiol.">
        <title>Two cytokinin receptors of Arabidopsis thaliana, CRE1/AHK4 and AHK3, differ in their ligand specificity in a bacterial assay.</title>
        <authorList>
            <person name="Spichal L."/>
            <person name="Rakova N.Y."/>
            <person name="Riefler M."/>
            <person name="Mizuno T."/>
            <person name="Romanov G.A."/>
            <person name="Strnad M."/>
            <person name="Schmuelling T."/>
        </authorList>
    </citation>
    <scope>FUNCTION</scope>
</reference>
<reference key="17">
    <citation type="journal article" date="2004" name="Plant J.">
        <title>Interallelic complementation at the Arabidopsis CRE1 locus uncovers independent pathways for the proliferation of vascular initials and canonical cytokinin signalling.</title>
        <authorList>
            <person name="de Leon B.G.-P."/>
            <person name="Zorrilla J.M.F."/>
            <person name="Rubio V."/>
            <person name="Dahiya P."/>
            <person name="Paz-Ares J."/>
            <person name="Leyva A."/>
        </authorList>
    </citation>
    <scope>FUNCTION</scope>
    <scope>MUTAGENESIS OF THR-301 AND LEU-529</scope>
</reference>
<reference key="18">
    <citation type="journal article" date="2004" name="Plant J.">
        <title>A novel regulatory pathway of sulfate uptake in Arabidopsis roots: implication of CRE1/WOL/AHK4-mediated cytokinin-dependent regulation.</title>
        <authorList>
            <person name="Maruyama-Nakashita A."/>
            <person name="Nakamura Y."/>
            <person name="Yamaya T."/>
            <person name="Takahashi H."/>
        </authorList>
    </citation>
    <scope>FUNCTION</scope>
    <scope>MUTAGENESIS OF GLY-490</scope>
</reference>
<reference key="19">
    <citation type="journal article" date="2004" name="Proc. Natl. Acad. Sci. U.S.A.">
        <title>In planta functions of the Arabidopsis cytokinin receptor family.</title>
        <authorList>
            <person name="Higuchi M."/>
            <person name="Pischke M.S."/>
            <person name="Maehoenen A.P."/>
            <person name="Miyawaki K."/>
            <person name="Hashimoto Y."/>
            <person name="Seki M."/>
            <person name="Kobayashi M."/>
            <person name="Shinozaki K."/>
            <person name="Kato T."/>
            <person name="Tabata S."/>
            <person name="Helariutta Y."/>
            <person name="Sussman M.R."/>
            <person name="Kakimoto T."/>
        </authorList>
    </citation>
    <scope>FUNCTION</scope>
    <scope>TISSUE SPECIFICITY</scope>
    <scope>DISRUPTION PHENOTYPE</scope>
</reference>
<reference key="20">
    <citation type="journal article" date="2005" name="Anal. Biochem.">
        <title>A live cell hormone-binding assay on transgenic bacteria expressing a eukaryotic receptor protein.</title>
        <authorList>
            <person name="Romanov G.A."/>
            <person name="Spichal L."/>
            <person name="Lomin S.N."/>
            <person name="Strnad M."/>
            <person name="Schmuelling T."/>
        </authorList>
    </citation>
    <scope>FUNCTION</scope>
    <scope>BIOPHYSICOCHEMICAL PROPERTIES</scope>
</reference>
<reference key="21">
    <citation type="journal article" date="2005" name="Plant Physiol.">
        <title>Interaction between phosphate-starvation, sugar, and cytokinin signaling in Arabidopsis and the roles of cytokinin receptors CRE1/AHK4 and AHK3.</title>
        <authorList>
            <person name="Franco-Zorrilla J.M."/>
            <person name="Martin A.C."/>
            <person name="Leyva A."/>
            <person name="Paz-Ares J."/>
        </authorList>
    </citation>
    <scope>FUNCTION</scope>
    <scope>DISRUPTION PHENOTYPE</scope>
</reference>
<reference key="22">
    <citation type="journal article" date="2005" name="Plant Physiol.">
        <title>Topolins and hydroxylated thidiazuron derivatives are substrates of cytokinin O-glucosyltransferase with position specificity related to receptor recognition.</title>
        <authorList>
            <person name="Mok M.C."/>
            <person name="Martin R.C."/>
            <person name="Dobrev P.I."/>
            <person name="Vankova R."/>
            <person name="Ho P.S."/>
            <person name="Yonekura-Sakakibara K."/>
            <person name="Sakakibara H."/>
            <person name="Mok D.W."/>
        </authorList>
    </citation>
    <scope>FUNCTION</scope>
</reference>
<reference key="23">
    <citation type="journal article" date="2006" name="Curr. Biol.">
        <title>Cytokinins regulate a bidirectional phosphorelay network in Arabidopsis.</title>
        <authorList>
            <person name="Maehoenen A.P."/>
            <person name="Higuchi M."/>
            <person name="Toermaekangas K."/>
            <person name="Miyawaki K."/>
            <person name="Pischke M.S."/>
            <person name="Sussman M.R."/>
            <person name="Helariutta Y."/>
            <person name="Kakimoto T."/>
        </authorList>
    </citation>
    <scope>FUNCTION</scope>
    <scope>PHOSPHORYLATION AT HIS-482</scope>
    <scope>MUTAGENESIS OF THR-301; HIS-482; PHE-708 AND ASP-996</scope>
    <scope>DISRUPTION PHENOTYPE</scope>
    <scope>DEVELOPMENTAL STAGE</scope>
</reference>
<reference key="24">
    <citation type="journal article" date="2006" name="FEBS J.">
        <title>Analysis of protein interactions within the cytokinin-signaling pathway of Arabidopsis thaliana.</title>
        <authorList>
            <person name="Dortay H."/>
            <person name="Mehnert N."/>
            <person name="Buerkle L."/>
            <person name="Schmuelling T."/>
            <person name="Heyl A."/>
        </authorList>
    </citation>
    <scope>INTERACTION WITH AHP1; AHP2; AHP3; AHP5 AND AHK3</scope>
</reference>
<reference key="25">
    <citation type="journal article" date="2006" name="J. Exp. Bot.">
        <title>Biochemical characteristics and ligand-binding properties of Arabidopsis cytokinin receptor AHK3 compared to CRE1/AHK4 as revealed by a direct binding assay.</title>
        <authorList>
            <person name="Romanov G.A."/>
            <person name="Lomin S.N."/>
            <person name="Schmuelling T."/>
        </authorList>
    </citation>
    <scope>FUNCTION</scope>
    <scope>BIOPHYSICOCHEMICAL PROPERTIES</scope>
</reference>
<reference key="26">
    <citation type="journal article" date="2006" name="Plant Cell">
        <title>Arabidopsis cytokinin receptor mutants reveal functions in shoot growth, leaf senescence, seed size, germination, root development, and cytokinin metabolism.</title>
        <authorList>
            <person name="Riefler M."/>
            <person name="Novak O."/>
            <person name="Strnad M."/>
            <person name="Schmuelling T."/>
        </authorList>
    </citation>
    <scope>FUNCTION</scope>
    <scope>DISRUPTION PHENOTYPE</scope>
</reference>
<reference key="27">
    <citation type="journal article" date="2006" name="Plant Cell Physiol.">
        <title>Cytokinin receptors are required for normal development of auxin-transporting vascular tissues in the hypocotyl but not in adventitious roots.</title>
        <authorList>
            <person name="Kuroha T."/>
            <person name="Ueguchi C."/>
            <person name="Sakakibara H."/>
            <person name="Satoh S."/>
        </authorList>
    </citation>
    <scope>FUNCTION</scope>
    <scope>DISRUPTION PHENOTYPE</scope>
    <scope>MUTAGENESIS OF MET-459 AND GLY-490</scope>
</reference>
<reference key="28">
    <citation type="journal article" date="2007" name="Planta">
        <title>The floral volatile, methyl benzoate, from snapdragon (Antirrhinum majus) triggers phytotoxic effects in Arabidopsis thaliana.</title>
        <authorList>
            <person name="Horiuchi J."/>
            <person name="Badri D.V."/>
            <person name="Kimball B.A."/>
            <person name="Negre F."/>
            <person name="Dudareva N."/>
            <person name="Paschke M.W."/>
            <person name="Vivanco J.M."/>
        </authorList>
    </citation>
    <scope>FUNCTION</scope>
</reference>
<reference key="29">
    <citation type="journal article" date="2007" name="Plant Cell Physiol.">
        <title>Identification of amino acid substitutions that render the Arabidopsis cytokinin receptor histidine kinase AHK4 constitutively active.</title>
        <authorList>
            <person name="Miwa K."/>
            <person name="Ishikawa K."/>
            <person name="Terada K."/>
            <person name="Yamada H."/>
            <person name="Suzuki T."/>
            <person name="Yamashino T."/>
            <person name="Mizuno T."/>
        </authorList>
    </citation>
    <scope>FUNCTION</scope>
    <scope>MUTAGENESIS OF THR-301; GLY-435; PHE-436; MET-447; VAL-471 AND MET-494</scope>
</reference>
<reference key="30">
    <citation type="journal article" date="2007" name="Proc. Natl. Acad. Sci. U.S.A.">
        <title>Functional analysis of AHK1/ATHK1 and cytokinin receptor histidine kinases in response to abscisic acid, drought, and salt stress in Arabidopsis.</title>
        <authorList>
            <person name="Tran L.S."/>
            <person name="Urao T."/>
            <person name="Qin F."/>
            <person name="Maruyama K."/>
            <person name="Kakimoto T."/>
            <person name="Shinozaki K."/>
            <person name="Yamaguchi-Shinozaki K."/>
        </authorList>
    </citation>
    <scope>FUNCTION</scope>
    <scope>INDUCTION</scope>
    <scope>DISRUPTION PHENOTYPE</scope>
</reference>
<reference key="31">
    <citation type="journal article" date="2007" name="Plant Physiol.">
        <title>Cytokinin receptors are involved in alkamide regulation of root and shoot development in Arabidopsis.</title>
        <authorList>
            <person name="Lopez-Bucio J."/>
            <person name="Millan-Godinez M."/>
            <person name="Mendez-Bravo A."/>
            <person name="Morquecho-Contreras A."/>
            <person name="Ramirez-Chavez E."/>
            <person name="Molina-Torres J."/>
            <person name="Perez-Torres A."/>
            <person name="Higuchi M."/>
            <person name="Kakimoto T."/>
            <person name="Herrera-Estrella L."/>
        </authorList>
    </citation>
    <scope>FUNCTION</scope>
    <scope>DISRUPTION PHENOTYPE</scope>
</reference>
<reference key="32">
    <citation type="journal article" date="2008" name="J. Mol. Biol.">
        <title>Mechanism-based inhibitors of cytokinin oxidase/dehydrogenase attack FAD cofactor.</title>
        <authorList>
            <person name="Kopecny D."/>
            <person name="Sebela M."/>
            <person name="Briozzo P."/>
            <person name="Spichal L."/>
            <person name="Houba-Herin N."/>
            <person name="Masek V."/>
            <person name="Joly N."/>
            <person name="Madzak C."/>
            <person name="Anzenbacher P."/>
            <person name="Laloue M."/>
        </authorList>
    </citation>
    <scope>FUNCTION</scope>
</reference>
<reference key="33">
    <citation type="journal article" date="2008" name="J. Proteome Res.">
        <title>Toward an interaction map of the two-component signaling pathway of Arabidopsis thaliana.</title>
        <authorList>
            <person name="Dortay H."/>
            <person name="Gruhn N."/>
            <person name="Pfeifer A."/>
            <person name="Schwerdtner M."/>
            <person name="Schmuelling T."/>
            <person name="Heyl A."/>
        </authorList>
    </citation>
    <scope>INTERACTION WITH AHP2; AMPD; WNK5 AND AT4G15630</scope>
</reference>
<reference key="34">
    <citation type="journal article" date="2008" name="Mol. Plant Microbe Interact.">
        <title>The role of auxins and cytokinins in the mutualistic interaction between Arabidopsis and Piriformospora indica.</title>
        <authorList>
            <person name="Vadassery J."/>
            <person name="Ritter C."/>
            <person name="Venus Y."/>
            <person name="Camehl I."/>
            <person name="Varma A."/>
            <person name="Shahollari B."/>
            <person name="Novak O."/>
            <person name="Strnad M."/>
            <person name="Ludwig-Mueller J."/>
            <person name="Oelmueller R."/>
        </authorList>
    </citation>
    <scope>FUNCTION</scope>
</reference>
<reference key="35">
    <citation type="journal article" date="2008" name="Plant J.">
        <title>Cytokinins negatively regulate the root iron uptake machinery in Arabidopsis through a growth-dependent pathway.</title>
        <authorList>
            <person name="Seguela M."/>
            <person name="Briat J.-F."/>
            <person name="Vert G."/>
            <person name="Curie C."/>
        </authorList>
    </citation>
    <scope>FUNCTION</scope>
    <scope>DISRUPTION PHENOTYPE</scope>
</reference>
<reference key="36">
    <citation type="journal article" date="2009" name="FEBS J.">
        <title>The purine derivative PI-55 blocks cytokinin action via receptor inhibition.</title>
        <authorList>
            <person name="Spichal L."/>
            <person name="Werner T."/>
            <person name="Popa I."/>
            <person name="Riefler M."/>
            <person name="Schmuelling T."/>
            <person name="Strnad M."/>
        </authorList>
    </citation>
    <scope>FUNCTION</scope>
    <scope>ACTIVITY REGULATION</scope>
</reference>
<reference key="37">
    <citation type="journal article" date="2010" name="Development">
        <title>STIMPY mediates cytokinin signaling during shoot meristem establishment in Arabidopsis seedlings.</title>
        <authorList>
            <person name="Skylar A."/>
            <person name="Hong F."/>
            <person name="Chory J."/>
            <person name="Weigel D."/>
            <person name="Wu X."/>
        </authorList>
    </citation>
    <scope>FUNCTION</scope>
    <scope>DISRUPTION PHENOTYPE</scope>
</reference>
<reference key="38">
    <citation type="journal article" date="2010" name="Phytochemistry">
        <title>Cytokinin receptor antagonists derived from 6-benzylaminopurine.</title>
        <authorList>
            <person name="Nisler J."/>
            <person name="Zatloukal M."/>
            <person name="Popa I."/>
            <person name="Dolezal K."/>
            <person name="Strnad M."/>
            <person name="Spichal L."/>
        </authorList>
    </citation>
    <scope>ACTIVITY REGULATION</scope>
</reference>
<reference key="39">
    <citation type="journal article" date="2011" name="Plant Physiol.">
        <title>The cytokinin receptors of Arabidopsis are located mainly to the endoplasmic reticulum.</title>
        <authorList>
            <person name="Wulfetange K."/>
            <person name="Lomin S.N."/>
            <person name="Romanov G.A."/>
            <person name="Stolz A."/>
            <person name="Heyl A."/>
            <person name="Schmuelling T."/>
        </authorList>
    </citation>
    <scope>SUBCELLULAR LOCATION</scope>
    <source>
        <strain>cv. Columbia</strain>
    </source>
</reference>
<reference key="40">
    <citation type="journal article" date="2013" name="Plant Cell">
        <title>The Arabidopsis eukaryotic translation initiation factor eIF5A-2 regulates root protoxylem development by modulating cytokinin signaling.</title>
        <authorList>
            <person name="Ren B."/>
            <person name="Chen Q."/>
            <person name="Hong S."/>
            <person name="Zhao W."/>
            <person name="Feng J."/>
            <person name="Feng H."/>
            <person name="Zuo J."/>
        </authorList>
    </citation>
    <scope>INTERACTION WITH FBR12 AND AHP1</scope>
</reference>
<reference evidence="50 51 52 53 54 55 56" key="41">
    <citation type="journal article" date="2011" name="Nat. Chem. Biol.">
        <title>Structural basis for cytokinin recognition by Arabidopsis thaliana histidine kinase 4.</title>
        <authorList>
            <person name="Hothorn M."/>
            <person name="Dabi T."/>
            <person name="Chory J."/>
        </authorList>
    </citation>
    <scope>X-RAY CRYSTALLOGRAPHY (1.53 ANGSTROMS) OF 149-418 IN COMPLEXES WITH THE CYTOKININS TRANS-ZEATIN; DIHYDROZEATIN; N(6)-DIMETHYLALLYLADENINE AND KINETIN OR THE HERBICIDE THIDIAZURON</scope>
    <scope>SUBUNIT</scope>
    <scope>MUTAGENESIS OF ALA-225; ALA-227; TYR-273; MET-279; ASP-285; THR-301; PRO-303; PHE-304; LEU-306; LEU-307; THR-317 AND GLY-343</scope>
</reference>
<reference evidence="57 58" key="42">
    <citation type="journal article" date="2021" name="Front. Plant Sci.">
        <title>3D domain swapping dimerization of the receiver domain of cytokinin receptor CRE1 from Arabidopsis thaliana and Medicago truncatula.</title>
        <authorList>
            <person name="Tran L.H."/>
            <person name="Urbanowicz A."/>
            <person name="Jasinski M."/>
            <person name="Jaskolski M."/>
            <person name="Ruszkowski M."/>
        </authorList>
    </citation>
    <scope>X-RAY CRYSTALLOGRAPHY (1.70 ANGSTROMS) OF 941-1080 IN COMPLEX WITH MG(2+)</scope>
</reference>
<proteinExistence type="evidence at protein level"/>
<evidence type="ECO:0000255" key="1"/>
<evidence type="ECO:0000255" key="2">
    <source>
        <dbReference type="PROSITE-ProRule" id="PRU00049"/>
    </source>
</evidence>
<evidence type="ECO:0000255" key="3">
    <source>
        <dbReference type="PROSITE-ProRule" id="PRU00107"/>
    </source>
</evidence>
<evidence type="ECO:0000255" key="4">
    <source>
        <dbReference type="PROSITE-ProRule" id="PRU00169"/>
    </source>
</evidence>
<evidence type="ECO:0000269" key="5">
    <source>
    </source>
</evidence>
<evidence type="ECO:0000269" key="6">
    <source>
    </source>
</evidence>
<evidence type="ECO:0000269" key="7">
    <source>
    </source>
</evidence>
<evidence type="ECO:0000269" key="8">
    <source>
    </source>
</evidence>
<evidence type="ECO:0000269" key="9">
    <source>
    </source>
</evidence>
<evidence type="ECO:0000269" key="10">
    <source>
    </source>
</evidence>
<evidence type="ECO:0000269" key="11">
    <source>
    </source>
</evidence>
<evidence type="ECO:0000269" key="12">
    <source>
    </source>
</evidence>
<evidence type="ECO:0000269" key="13">
    <source>
    </source>
</evidence>
<evidence type="ECO:0000269" key="14">
    <source>
    </source>
</evidence>
<evidence type="ECO:0000269" key="15">
    <source>
    </source>
</evidence>
<evidence type="ECO:0000269" key="16">
    <source>
    </source>
</evidence>
<evidence type="ECO:0000269" key="17">
    <source>
    </source>
</evidence>
<evidence type="ECO:0000269" key="18">
    <source>
    </source>
</evidence>
<evidence type="ECO:0000269" key="19">
    <source>
    </source>
</evidence>
<evidence type="ECO:0000269" key="20">
    <source>
    </source>
</evidence>
<evidence type="ECO:0000269" key="21">
    <source>
    </source>
</evidence>
<evidence type="ECO:0000269" key="22">
    <source>
    </source>
</evidence>
<evidence type="ECO:0000269" key="23">
    <source>
    </source>
</evidence>
<evidence type="ECO:0000269" key="24">
    <source>
    </source>
</evidence>
<evidence type="ECO:0000269" key="25">
    <source>
    </source>
</evidence>
<evidence type="ECO:0000269" key="26">
    <source>
    </source>
</evidence>
<evidence type="ECO:0000269" key="27">
    <source>
    </source>
</evidence>
<evidence type="ECO:0000269" key="28">
    <source>
    </source>
</evidence>
<evidence type="ECO:0000269" key="29">
    <source>
    </source>
</evidence>
<evidence type="ECO:0000269" key="30">
    <source>
    </source>
</evidence>
<evidence type="ECO:0000269" key="31">
    <source>
    </source>
</evidence>
<evidence type="ECO:0000269" key="32">
    <source>
    </source>
</evidence>
<evidence type="ECO:0000269" key="33">
    <source>
    </source>
</evidence>
<evidence type="ECO:0000269" key="34">
    <source>
    </source>
</evidence>
<evidence type="ECO:0000269" key="35">
    <source>
    </source>
</evidence>
<evidence type="ECO:0000269" key="36">
    <source>
    </source>
</evidence>
<evidence type="ECO:0000269" key="37">
    <source>
    </source>
</evidence>
<evidence type="ECO:0000269" key="38">
    <source>
    </source>
</evidence>
<evidence type="ECO:0000269" key="39">
    <source>
    </source>
</evidence>
<evidence type="ECO:0000269" key="40">
    <source>
    </source>
</evidence>
<evidence type="ECO:0000269" key="41">
    <source>
    </source>
</evidence>
<evidence type="ECO:0000303" key="42">
    <source>
    </source>
</evidence>
<evidence type="ECO:0000303" key="43">
    <source>
    </source>
</evidence>
<evidence type="ECO:0000303" key="44">
    <source>
    </source>
</evidence>
<evidence type="ECO:0000303" key="45">
    <source>
    </source>
</evidence>
<evidence type="ECO:0000303" key="46">
    <source>
    </source>
</evidence>
<evidence type="ECO:0000305" key="47"/>
<evidence type="ECO:0000312" key="48">
    <source>
        <dbReference type="Araport" id="AT2G01830"/>
    </source>
</evidence>
<evidence type="ECO:0000312" key="49">
    <source>
        <dbReference type="EMBL" id="AAD21777.2"/>
    </source>
</evidence>
<evidence type="ECO:0007744" key="50">
    <source>
        <dbReference type="PDB" id="3T4J"/>
    </source>
</evidence>
<evidence type="ECO:0007744" key="51">
    <source>
        <dbReference type="PDB" id="3T4K"/>
    </source>
</evidence>
<evidence type="ECO:0007744" key="52">
    <source>
        <dbReference type="PDB" id="3T4L"/>
    </source>
</evidence>
<evidence type="ECO:0007744" key="53">
    <source>
        <dbReference type="PDB" id="3T4O"/>
    </source>
</evidence>
<evidence type="ECO:0007744" key="54">
    <source>
        <dbReference type="PDB" id="3T4Q"/>
    </source>
</evidence>
<evidence type="ECO:0007744" key="55">
    <source>
        <dbReference type="PDB" id="3T4S"/>
    </source>
</evidence>
<evidence type="ECO:0007744" key="56">
    <source>
        <dbReference type="PDB" id="3T4T"/>
    </source>
</evidence>
<evidence type="ECO:0007744" key="57">
    <source>
        <dbReference type="PDB" id="7P8C"/>
    </source>
</evidence>
<evidence type="ECO:0007744" key="58">
    <source>
        <dbReference type="PDB" id="7P8D"/>
    </source>
</evidence>
<evidence type="ECO:0007829" key="59">
    <source>
        <dbReference type="PDB" id="3T4L"/>
    </source>
</evidence>
<evidence type="ECO:0007829" key="60">
    <source>
        <dbReference type="PDB" id="3T4T"/>
    </source>
</evidence>
<evidence type="ECO:0007829" key="61">
    <source>
        <dbReference type="PDB" id="7P8C"/>
    </source>
</evidence>
<evidence type="ECO:0007829" key="62">
    <source>
        <dbReference type="PDB" id="7P8D"/>
    </source>
</evidence>
<dbReference type="EC" id="2.7.13.3" evidence="9"/>
<dbReference type="EC" id="3.1.3.16"/>
<dbReference type="EMBL" id="AJ278528">
    <property type="protein sequence ID" value="CAC18521.1"/>
    <property type="molecule type" value="mRNA"/>
</dbReference>
<dbReference type="EMBL" id="AJ278529">
    <property type="protein sequence ID" value="CAC18522.1"/>
    <property type="molecule type" value="mRNA"/>
</dbReference>
<dbReference type="EMBL" id="AJ278530">
    <property type="protein sequence ID" value="CAC18523.1"/>
    <property type="molecule type" value="mRNA"/>
</dbReference>
<dbReference type="EMBL" id="AB049934">
    <property type="protein sequence ID" value="BAB33310.1"/>
    <property type="molecule type" value="mRNA"/>
</dbReference>
<dbReference type="EMBL" id="AB049935">
    <property type="protein sequence ID" value="BAB33311.1"/>
    <property type="molecule type" value="mRNA"/>
</dbReference>
<dbReference type="EMBL" id="AB046871">
    <property type="protein sequence ID" value="BAB40776.1"/>
    <property type="molecule type" value="mRNA"/>
</dbReference>
<dbReference type="EMBL" id="AC007069">
    <property type="protein sequence ID" value="AAD21777.2"/>
    <property type="molecule type" value="Genomic_DNA"/>
</dbReference>
<dbReference type="EMBL" id="CP002685">
    <property type="protein sequence ID" value="AEC05505.1"/>
    <property type="molecule type" value="Genomic_DNA"/>
</dbReference>
<dbReference type="EMBL" id="CP002685">
    <property type="protein sequence ID" value="AEC05506.1"/>
    <property type="molecule type" value="Genomic_DNA"/>
</dbReference>
<dbReference type="EMBL" id="CP002685">
    <property type="protein sequence ID" value="AEC05507.1"/>
    <property type="molecule type" value="Genomic_DNA"/>
</dbReference>
<dbReference type="EMBL" id="CP002685">
    <property type="protein sequence ID" value="ANM62256.1"/>
    <property type="molecule type" value="Genomic_DNA"/>
</dbReference>
<dbReference type="EMBL" id="CP002685">
    <property type="protein sequence ID" value="ANM62257.1"/>
    <property type="molecule type" value="Genomic_DNA"/>
</dbReference>
<dbReference type="EMBL" id="EF598292">
    <property type="protein sequence ID" value="ABQ85264.1"/>
    <property type="molecule type" value="Genomic_DNA"/>
</dbReference>
<dbReference type="EMBL" id="EF598293">
    <property type="protein sequence ID" value="ABQ85265.1"/>
    <property type="molecule type" value="Genomic_DNA"/>
</dbReference>
<dbReference type="EMBL" id="EF598294">
    <property type="protein sequence ID" value="ABQ85266.1"/>
    <property type="molecule type" value="Genomic_DNA"/>
</dbReference>
<dbReference type="EMBL" id="EF598295">
    <property type="protein sequence ID" value="ABQ85267.1"/>
    <property type="molecule type" value="Genomic_DNA"/>
</dbReference>
<dbReference type="EMBL" id="EF598296">
    <property type="protein sequence ID" value="ABQ85268.1"/>
    <property type="molecule type" value="Genomic_DNA"/>
</dbReference>
<dbReference type="EMBL" id="EF598297">
    <property type="protein sequence ID" value="ABQ85269.1"/>
    <property type="molecule type" value="Genomic_DNA"/>
</dbReference>
<dbReference type="EMBL" id="EF598298">
    <property type="protein sequence ID" value="ABQ85270.1"/>
    <property type="molecule type" value="Genomic_DNA"/>
</dbReference>
<dbReference type="EMBL" id="EF598299">
    <property type="protein sequence ID" value="ABQ85271.1"/>
    <property type="molecule type" value="Genomic_DNA"/>
</dbReference>
<dbReference type="EMBL" id="EF598300">
    <property type="protein sequence ID" value="ABQ85272.1"/>
    <property type="molecule type" value="Genomic_DNA"/>
</dbReference>
<dbReference type="EMBL" id="EF598301">
    <property type="protein sequence ID" value="ABQ85273.1"/>
    <property type="molecule type" value="Genomic_DNA"/>
</dbReference>
<dbReference type="EMBL" id="EF598302">
    <property type="protein sequence ID" value="ABQ85274.1"/>
    <property type="molecule type" value="Genomic_DNA"/>
</dbReference>
<dbReference type="EMBL" id="EF598303">
    <property type="protein sequence ID" value="ABQ85275.1"/>
    <property type="molecule type" value="Genomic_DNA"/>
</dbReference>
<dbReference type="EMBL" id="EF598304">
    <property type="protein sequence ID" value="ABQ85276.1"/>
    <property type="molecule type" value="Genomic_DNA"/>
</dbReference>
<dbReference type="EMBL" id="EF598305">
    <property type="protein sequence ID" value="ABQ85277.1"/>
    <property type="molecule type" value="Genomic_DNA"/>
</dbReference>
<dbReference type="EMBL" id="EF598306">
    <property type="protein sequence ID" value="ABQ85278.1"/>
    <property type="molecule type" value="Genomic_DNA"/>
</dbReference>
<dbReference type="EMBL" id="EF598307">
    <property type="protein sequence ID" value="ABQ85279.1"/>
    <property type="molecule type" value="Genomic_DNA"/>
</dbReference>
<dbReference type="EMBL" id="EF598308">
    <property type="protein sequence ID" value="ABQ85280.1"/>
    <property type="molecule type" value="Genomic_DNA"/>
</dbReference>
<dbReference type="EMBL" id="EF598309">
    <property type="protein sequence ID" value="ABQ85281.1"/>
    <property type="molecule type" value="Genomic_DNA"/>
</dbReference>
<dbReference type="EMBL" id="EF598310">
    <property type="protein sequence ID" value="ABQ85282.1"/>
    <property type="molecule type" value="Genomic_DNA"/>
</dbReference>
<dbReference type="EMBL" id="EF598311">
    <property type="protein sequence ID" value="ABQ85283.1"/>
    <property type="molecule type" value="Genomic_DNA"/>
</dbReference>
<dbReference type="EMBL" id="EF598312">
    <property type="protein sequence ID" value="ABQ85284.1"/>
    <property type="molecule type" value="Genomic_DNA"/>
</dbReference>
<dbReference type="EMBL" id="EF598313">
    <property type="protein sequence ID" value="ABQ85285.1"/>
    <property type="molecule type" value="Genomic_DNA"/>
</dbReference>
<dbReference type="EMBL" id="EF598314">
    <property type="protein sequence ID" value="ABQ85286.1"/>
    <property type="molecule type" value="Genomic_DNA"/>
</dbReference>
<dbReference type="EMBL" id="EF598315">
    <property type="protein sequence ID" value="ABQ85287.1"/>
    <property type="molecule type" value="Genomic_DNA"/>
</dbReference>
<dbReference type="PIR" id="F84429">
    <property type="entry name" value="F84429"/>
</dbReference>
<dbReference type="RefSeq" id="NP_001324428.1">
    <molecule id="Q9C5U0-2"/>
    <property type="nucleotide sequence ID" value="NM_001335080.1"/>
</dbReference>
<dbReference type="RefSeq" id="NP_001324429.1">
    <molecule id="Q9C5U0-2"/>
    <property type="nucleotide sequence ID" value="NM_001335082.1"/>
</dbReference>
<dbReference type="RefSeq" id="NP_565277.1">
    <molecule id="Q9C5U0-2"/>
    <property type="nucleotide sequence ID" value="NM_126244.3"/>
</dbReference>
<dbReference type="RefSeq" id="NP_849925.1">
    <molecule id="Q9C5U0-1"/>
    <property type="nucleotide sequence ID" value="NM_179594.2"/>
</dbReference>
<dbReference type="RefSeq" id="NP_973396.1">
    <molecule id="Q9C5U0-2"/>
    <property type="nucleotide sequence ID" value="NM_201667.1"/>
</dbReference>
<dbReference type="PDB" id="3T4J">
    <property type="method" value="X-ray"/>
    <property type="resolution" value="1.65 A"/>
    <property type="chains" value="A/B=149-418"/>
</dbReference>
<dbReference type="PDB" id="3T4K">
    <property type="method" value="X-ray"/>
    <property type="resolution" value="1.77 A"/>
    <property type="chains" value="A/B=149-418"/>
</dbReference>
<dbReference type="PDB" id="3T4L">
    <property type="method" value="X-ray"/>
    <property type="resolution" value="1.53 A"/>
    <property type="chains" value="A/B=149-418"/>
</dbReference>
<dbReference type="PDB" id="3T4O">
    <property type="method" value="X-ray"/>
    <property type="resolution" value="1.75 A"/>
    <property type="chains" value="A/B=149-418"/>
</dbReference>
<dbReference type="PDB" id="3T4Q">
    <property type="method" value="X-ray"/>
    <property type="resolution" value="2.30 A"/>
    <property type="chains" value="A/B=149-418"/>
</dbReference>
<dbReference type="PDB" id="3T4S">
    <property type="method" value="X-ray"/>
    <property type="resolution" value="1.60 A"/>
    <property type="chains" value="A/B=149-418"/>
</dbReference>
<dbReference type="PDB" id="3T4T">
    <property type="method" value="X-ray"/>
    <property type="resolution" value="1.70 A"/>
    <property type="chains" value="A/B=149-418"/>
</dbReference>
<dbReference type="PDB" id="7P8C">
    <property type="method" value="X-ray"/>
    <property type="resolution" value="2.15 A"/>
    <property type="chains" value="A/B=941-1071"/>
</dbReference>
<dbReference type="PDB" id="7P8D">
    <property type="method" value="X-ray"/>
    <property type="resolution" value="1.70 A"/>
    <property type="chains" value="A/B=941-1080"/>
</dbReference>
<dbReference type="PDBsum" id="3T4J"/>
<dbReference type="PDBsum" id="3T4K"/>
<dbReference type="PDBsum" id="3T4L"/>
<dbReference type="PDBsum" id="3T4O"/>
<dbReference type="PDBsum" id="3T4Q"/>
<dbReference type="PDBsum" id="3T4S"/>
<dbReference type="PDBsum" id="3T4T"/>
<dbReference type="PDBsum" id="7P8C"/>
<dbReference type="PDBsum" id="7P8D"/>
<dbReference type="SMR" id="Q9C5U0"/>
<dbReference type="BioGRID" id="117">
    <property type="interactions" value="32"/>
</dbReference>
<dbReference type="FunCoup" id="Q9C5U0">
    <property type="interactions" value="305"/>
</dbReference>
<dbReference type="IntAct" id="Q9C5U0">
    <property type="interactions" value="30"/>
</dbReference>
<dbReference type="STRING" id="3702.Q9C5U0"/>
<dbReference type="BindingDB" id="Q9C5U0"/>
<dbReference type="ChEMBL" id="CHEMBL6124"/>
<dbReference type="TCDB" id="9.B.238.3.7">
    <property type="family name" value="the uncharacterized bacterial 5 tms protein-1 (ubp1) family"/>
</dbReference>
<dbReference type="iPTMnet" id="Q9C5U0"/>
<dbReference type="PaxDb" id="3702-AT2G01830.2"/>
<dbReference type="EnsemblPlants" id="AT2G01830.1">
    <molecule id="Q9C5U0-2"/>
    <property type="protein sequence ID" value="AT2G01830.1"/>
    <property type="gene ID" value="AT2G01830"/>
</dbReference>
<dbReference type="EnsemblPlants" id="AT2G01830.2">
    <molecule id="Q9C5U0-1"/>
    <property type="protein sequence ID" value="AT2G01830.2"/>
    <property type="gene ID" value="AT2G01830"/>
</dbReference>
<dbReference type="EnsemblPlants" id="AT2G01830.3">
    <molecule id="Q9C5U0-2"/>
    <property type="protein sequence ID" value="AT2G01830.3"/>
    <property type="gene ID" value="AT2G01830"/>
</dbReference>
<dbReference type="EnsemblPlants" id="AT2G01830.4">
    <molecule id="Q9C5U0-2"/>
    <property type="protein sequence ID" value="AT2G01830.4"/>
    <property type="gene ID" value="AT2G01830"/>
</dbReference>
<dbReference type="EnsemblPlants" id="AT2G01830.6">
    <molecule id="Q9C5U0-2"/>
    <property type="protein sequence ID" value="AT2G01830.6"/>
    <property type="gene ID" value="AT2G01830"/>
</dbReference>
<dbReference type="GeneID" id="814714"/>
<dbReference type="Gramene" id="AT2G01830.1">
    <molecule id="Q9C5U0-2"/>
    <property type="protein sequence ID" value="AT2G01830.1"/>
    <property type="gene ID" value="AT2G01830"/>
</dbReference>
<dbReference type="Gramene" id="AT2G01830.2">
    <molecule id="Q9C5U0-1"/>
    <property type="protein sequence ID" value="AT2G01830.2"/>
    <property type="gene ID" value="AT2G01830"/>
</dbReference>
<dbReference type="Gramene" id="AT2G01830.3">
    <molecule id="Q9C5U0-2"/>
    <property type="protein sequence ID" value="AT2G01830.3"/>
    <property type="gene ID" value="AT2G01830"/>
</dbReference>
<dbReference type="Gramene" id="AT2G01830.4">
    <molecule id="Q9C5U0-2"/>
    <property type="protein sequence ID" value="AT2G01830.4"/>
    <property type="gene ID" value="AT2G01830"/>
</dbReference>
<dbReference type="Gramene" id="AT2G01830.6">
    <molecule id="Q9C5U0-2"/>
    <property type="protein sequence ID" value="AT2G01830.6"/>
    <property type="gene ID" value="AT2G01830"/>
</dbReference>
<dbReference type="KEGG" id="ath:AT2G01830"/>
<dbReference type="Araport" id="AT2G01830"/>
<dbReference type="TAIR" id="AT2G01830">
    <property type="gene designation" value="WOL"/>
</dbReference>
<dbReference type="eggNOG" id="KOG0519">
    <property type="taxonomic scope" value="Eukaryota"/>
</dbReference>
<dbReference type="InParanoid" id="Q9C5U0"/>
<dbReference type="PhylomeDB" id="Q9C5U0"/>
<dbReference type="EvolutionaryTrace" id="Q9C5U0"/>
<dbReference type="PRO" id="PR:Q9C5U0"/>
<dbReference type="Proteomes" id="UP000006548">
    <property type="component" value="Chromosome 2"/>
</dbReference>
<dbReference type="ExpressionAtlas" id="Q9C5U0">
    <property type="expression patterns" value="baseline and differential"/>
</dbReference>
<dbReference type="GO" id="GO:0005783">
    <property type="term" value="C:endoplasmic reticulum"/>
    <property type="evidence" value="ECO:0007005"/>
    <property type="project" value="TAIR"/>
</dbReference>
<dbReference type="GO" id="GO:0005789">
    <property type="term" value="C:endoplasmic reticulum membrane"/>
    <property type="evidence" value="ECO:0007669"/>
    <property type="project" value="UniProtKB-SubCell"/>
</dbReference>
<dbReference type="GO" id="GO:0005886">
    <property type="term" value="C:plasma membrane"/>
    <property type="evidence" value="ECO:0000250"/>
    <property type="project" value="UniProtKB"/>
</dbReference>
<dbReference type="GO" id="GO:0009884">
    <property type="term" value="F:cytokinin receptor activity"/>
    <property type="evidence" value="ECO:0000314"/>
    <property type="project" value="TAIR"/>
</dbReference>
<dbReference type="GO" id="GO:0019899">
    <property type="term" value="F:enzyme binding"/>
    <property type="evidence" value="ECO:0000353"/>
    <property type="project" value="UniProtKB"/>
</dbReference>
<dbReference type="GO" id="GO:0004721">
    <property type="term" value="F:phosphoprotein phosphatase activity"/>
    <property type="evidence" value="ECO:0000314"/>
    <property type="project" value="TAIR"/>
</dbReference>
<dbReference type="GO" id="GO:0000155">
    <property type="term" value="F:phosphorelay sensor kinase activity"/>
    <property type="evidence" value="ECO:0007669"/>
    <property type="project" value="InterPro"/>
</dbReference>
<dbReference type="GO" id="GO:0004673">
    <property type="term" value="F:protein histidine kinase activity"/>
    <property type="evidence" value="ECO:0000314"/>
    <property type="project" value="TAIR"/>
</dbReference>
<dbReference type="GO" id="GO:0043424">
    <property type="term" value="F:protein histidine kinase binding"/>
    <property type="evidence" value="ECO:0000353"/>
    <property type="project" value="UniProtKB"/>
</dbReference>
<dbReference type="GO" id="GO:0019901">
    <property type="term" value="F:protein kinase binding"/>
    <property type="evidence" value="ECO:0000353"/>
    <property type="project" value="UniProtKB"/>
</dbReference>
<dbReference type="GO" id="GO:0004722">
    <property type="term" value="F:protein serine/threonine phosphatase activity"/>
    <property type="evidence" value="ECO:0007669"/>
    <property type="project" value="UniProtKB-EC"/>
</dbReference>
<dbReference type="GO" id="GO:0009885">
    <property type="term" value="F:transmembrane histidine kinase cytokinin receptor activity"/>
    <property type="evidence" value="ECO:0000314"/>
    <property type="project" value="UniProtKB"/>
</dbReference>
<dbReference type="GO" id="GO:0033500">
    <property type="term" value="P:carbohydrate homeostasis"/>
    <property type="evidence" value="ECO:0000315"/>
    <property type="project" value="TAIR"/>
</dbReference>
<dbReference type="GO" id="GO:0016036">
    <property type="term" value="P:cellular response to phosphate starvation"/>
    <property type="evidence" value="ECO:0000315"/>
    <property type="project" value="UniProtKB"/>
</dbReference>
<dbReference type="GO" id="GO:0071329">
    <property type="term" value="P:cellular response to sucrose stimulus"/>
    <property type="evidence" value="ECO:0000315"/>
    <property type="project" value="UniProtKB"/>
</dbReference>
<dbReference type="GO" id="GO:0009736">
    <property type="term" value="P:cytokinin-activated signaling pathway"/>
    <property type="evidence" value="ECO:0000304"/>
    <property type="project" value="TAIR"/>
</dbReference>
<dbReference type="GO" id="GO:0042742">
    <property type="term" value="P:defense response to bacterium"/>
    <property type="evidence" value="ECO:0000314"/>
    <property type="project" value="TAIR"/>
</dbReference>
<dbReference type="GO" id="GO:0010086">
    <property type="term" value="P:embryonic root morphogenesis"/>
    <property type="evidence" value="ECO:0000315"/>
    <property type="project" value="TAIR"/>
</dbReference>
<dbReference type="GO" id="GO:0007231">
    <property type="term" value="P:osmosensory signaling pathway"/>
    <property type="evidence" value="ECO:0000315"/>
    <property type="project" value="TAIR"/>
</dbReference>
<dbReference type="GO" id="GO:0000160">
    <property type="term" value="P:phosphorelay signal transduction system"/>
    <property type="evidence" value="ECO:0000314"/>
    <property type="project" value="UniProtKB"/>
</dbReference>
<dbReference type="GO" id="GO:0006468">
    <property type="term" value="P:protein phosphorylation"/>
    <property type="evidence" value="ECO:0000316"/>
    <property type="project" value="TAIR"/>
</dbReference>
<dbReference type="GO" id="GO:0048509">
    <property type="term" value="P:regulation of meristem development"/>
    <property type="evidence" value="ECO:0000315"/>
    <property type="project" value="UniProtKB"/>
</dbReference>
<dbReference type="GO" id="GO:0010029">
    <property type="term" value="P:regulation of seed germination"/>
    <property type="evidence" value="ECO:0000315"/>
    <property type="project" value="TAIR"/>
</dbReference>
<dbReference type="GO" id="GO:0048831">
    <property type="term" value="P:regulation of shoot system development"/>
    <property type="evidence" value="ECO:0000315"/>
    <property type="project" value="TAIR"/>
</dbReference>
<dbReference type="GO" id="GO:0009414">
    <property type="term" value="P:response to water deprivation"/>
    <property type="evidence" value="ECO:0000270"/>
    <property type="project" value="TAIR"/>
</dbReference>
<dbReference type="GO" id="GO:1902358">
    <property type="term" value="P:sulfate transmembrane transport"/>
    <property type="evidence" value="ECO:0000315"/>
    <property type="project" value="UniProtKB"/>
</dbReference>
<dbReference type="CDD" id="cd16922">
    <property type="entry name" value="HATPase_EvgS-ArcB-TorS-like"/>
    <property type="match status" value="1"/>
</dbReference>
<dbReference type="CDD" id="cd00082">
    <property type="entry name" value="HisKA"/>
    <property type="match status" value="1"/>
</dbReference>
<dbReference type="CDD" id="cd06223">
    <property type="entry name" value="PRTases_typeI"/>
    <property type="match status" value="1"/>
</dbReference>
<dbReference type="CDD" id="cd17546">
    <property type="entry name" value="REC_hyHK_CKI1_RcsC-like"/>
    <property type="match status" value="1"/>
</dbReference>
<dbReference type="FunFam" id="1.10.287.130:FF:000015">
    <property type="entry name" value="Histidine kinase 4"/>
    <property type="match status" value="1"/>
</dbReference>
<dbReference type="FunFam" id="3.30.450.350:FF:000001">
    <property type="entry name" value="Histidine kinase 4"/>
    <property type="match status" value="1"/>
</dbReference>
<dbReference type="Gene3D" id="1.10.287.130">
    <property type="match status" value="1"/>
</dbReference>
<dbReference type="Gene3D" id="3.40.50.2300">
    <property type="match status" value="1"/>
</dbReference>
<dbReference type="Gene3D" id="6.10.250.1190">
    <property type="match status" value="1"/>
</dbReference>
<dbReference type="Gene3D" id="3.30.450.350">
    <property type="entry name" value="CHASE domain"/>
    <property type="match status" value="1"/>
</dbReference>
<dbReference type="Gene3D" id="3.30.565.10">
    <property type="entry name" value="Histidine kinase-like ATPase, C-terminal domain"/>
    <property type="match status" value="1"/>
</dbReference>
<dbReference type="InterPro" id="IPR050956">
    <property type="entry name" value="2C_system_His_kinase"/>
</dbReference>
<dbReference type="InterPro" id="IPR006189">
    <property type="entry name" value="CHASE_dom"/>
</dbReference>
<dbReference type="InterPro" id="IPR042240">
    <property type="entry name" value="CHASE_sf"/>
</dbReference>
<dbReference type="InterPro" id="IPR011006">
    <property type="entry name" value="CheY-like_superfamily"/>
</dbReference>
<dbReference type="InterPro" id="IPR036890">
    <property type="entry name" value="HATPase_C_sf"/>
</dbReference>
<dbReference type="InterPro" id="IPR005467">
    <property type="entry name" value="His_kinase_dom"/>
</dbReference>
<dbReference type="InterPro" id="IPR003661">
    <property type="entry name" value="HisK_dim/P_dom"/>
</dbReference>
<dbReference type="InterPro" id="IPR036097">
    <property type="entry name" value="HisK_dim/P_sf"/>
</dbReference>
<dbReference type="InterPro" id="IPR000836">
    <property type="entry name" value="PRibTrfase_dom"/>
</dbReference>
<dbReference type="InterPro" id="IPR056839">
    <property type="entry name" value="Receiver_AHK4/CRE1_1st"/>
</dbReference>
<dbReference type="InterPro" id="IPR004358">
    <property type="entry name" value="Sig_transdc_His_kin-like_C"/>
</dbReference>
<dbReference type="InterPro" id="IPR001789">
    <property type="entry name" value="Sig_transdc_resp-reg_receiver"/>
</dbReference>
<dbReference type="PANTHER" id="PTHR43719:SF51">
    <property type="entry name" value="HISTIDINE KINASE 4"/>
    <property type="match status" value="1"/>
</dbReference>
<dbReference type="PANTHER" id="PTHR43719">
    <property type="entry name" value="TWO-COMPONENT HISTIDINE KINASE"/>
    <property type="match status" value="1"/>
</dbReference>
<dbReference type="Pfam" id="PF03924">
    <property type="entry name" value="CHASE"/>
    <property type="match status" value="1"/>
</dbReference>
<dbReference type="Pfam" id="PF02518">
    <property type="entry name" value="HATPase_c"/>
    <property type="match status" value="1"/>
</dbReference>
<dbReference type="Pfam" id="PF00512">
    <property type="entry name" value="HisKA"/>
    <property type="match status" value="1"/>
</dbReference>
<dbReference type="Pfam" id="PF24896">
    <property type="entry name" value="Receiver_CRE1"/>
    <property type="match status" value="1"/>
</dbReference>
<dbReference type="Pfam" id="PF00072">
    <property type="entry name" value="Response_reg"/>
    <property type="match status" value="1"/>
</dbReference>
<dbReference type="PRINTS" id="PR00344">
    <property type="entry name" value="BCTRLSENSOR"/>
</dbReference>
<dbReference type="SMART" id="SM01079">
    <property type="entry name" value="CHASE"/>
    <property type="match status" value="1"/>
</dbReference>
<dbReference type="SMART" id="SM00387">
    <property type="entry name" value="HATPase_c"/>
    <property type="match status" value="1"/>
</dbReference>
<dbReference type="SMART" id="SM00388">
    <property type="entry name" value="HisKA"/>
    <property type="match status" value="1"/>
</dbReference>
<dbReference type="SMART" id="SM00448">
    <property type="entry name" value="REC"/>
    <property type="match status" value="1"/>
</dbReference>
<dbReference type="SUPFAM" id="SSF55874">
    <property type="entry name" value="ATPase domain of HSP90 chaperone/DNA topoisomerase II/histidine kinase"/>
    <property type="match status" value="1"/>
</dbReference>
<dbReference type="SUPFAM" id="SSF52172">
    <property type="entry name" value="CheY-like"/>
    <property type="match status" value="2"/>
</dbReference>
<dbReference type="SUPFAM" id="SSF47384">
    <property type="entry name" value="Homodimeric domain of signal transducing histidine kinase"/>
    <property type="match status" value="1"/>
</dbReference>
<dbReference type="PROSITE" id="PS50839">
    <property type="entry name" value="CHASE"/>
    <property type="match status" value="1"/>
</dbReference>
<dbReference type="PROSITE" id="PS50109">
    <property type="entry name" value="HIS_KIN"/>
    <property type="match status" value="1"/>
</dbReference>
<dbReference type="PROSITE" id="PS50110">
    <property type="entry name" value="RESPONSE_REGULATORY"/>
    <property type="match status" value="2"/>
</dbReference>
<feature type="chain" id="PRO_0000398589" description="Histidine kinase 4">
    <location>
        <begin position="1"/>
        <end position="1080"/>
    </location>
</feature>
<feature type="topological domain" description="Cytoplasmic" evidence="1">
    <location>
        <begin position="1"/>
        <end position="124"/>
    </location>
</feature>
<feature type="transmembrane region" description="Helical" evidence="1">
    <location>
        <begin position="125"/>
        <end position="145"/>
    </location>
</feature>
<feature type="topological domain" description="Extracellular" evidence="1">
    <location>
        <begin position="146"/>
        <end position="429"/>
    </location>
</feature>
<feature type="transmembrane region" description="Helical" evidence="1">
    <location>
        <begin position="430"/>
        <end position="450"/>
    </location>
</feature>
<feature type="topological domain" description="Cytoplasmic" evidence="1">
    <location>
        <begin position="451"/>
        <end position="1080"/>
    </location>
</feature>
<feature type="domain" description="CHASE" evidence="2">
    <location>
        <begin position="198"/>
        <end position="411"/>
    </location>
</feature>
<feature type="domain" description="Histidine kinase" evidence="3">
    <location>
        <begin position="479"/>
        <end position="760"/>
    </location>
</feature>
<feature type="domain" description="Response regulatory 1" evidence="4">
    <location>
        <begin position="786"/>
        <end position="920"/>
    </location>
</feature>
<feature type="domain" description="Response regulatory 2" evidence="4">
    <location>
        <begin position="946"/>
        <end position="1071"/>
    </location>
</feature>
<feature type="binding site" evidence="39 53">
    <location>
        <position position="285"/>
    </location>
    <ligand>
        <name>dihydrozeatin</name>
        <dbReference type="ChEBI" id="CHEBI:17874"/>
    </ligand>
</feature>
<feature type="binding site" evidence="39 55">
    <location>
        <position position="285"/>
    </location>
    <ligand>
        <name>kinetin</name>
        <dbReference type="ChEBI" id="CHEBI:27407"/>
    </ligand>
</feature>
<feature type="binding site" evidence="39 50">
    <location>
        <position position="285"/>
    </location>
    <ligand>
        <name>N(6)-dimethylallyladenine</name>
        <dbReference type="ChEBI" id="CHEBI:17660"/>
    </ligand>
</feature>
<feature type="binding site" evidence="39 52 54">
    <location>
        <position position="285"/>
    </location>
    <ligand>
        <name>trans-zeatin</name>
        <dbReference type="ChEBI" id="CHEBI:16522"/>
    </ligand>
</feature>
<feature type="binding site" evidence="39 53">
    <location>
        <position position="307"/>
    </location>
    <ligand>
        <name>dihydrozeatin</name>
        <dbReference type="ChEBI" id="CHEBI:17874"/>
    </ligand>
</feature>
<feature type="binding site" evidence="39 55">
    <location>
        <position position="307"/>
    </location>
    <ligand>
        <name>kinetin</name>
        <dbReference type="ChEBI" id="CHEBI:27407"/>
    </ligand>
</feature>
<feature type="binding site" evidence="39 50">
    <location>
        <position position="307"/>
    </location>
    <ligand>
        <name>N(6)-dimethylallyladenine</name>
        <dbReference type="ChEBI" id="CHEBI:17660"/>
    </ligand>
</feature>
<feature type="binding site" evidence="39 52 54">
    <location>
        <position position="307"/>
    </location>
    <ligand>
        <name>trans-zeatin</name>
        <dbReference type="ChEBI" id="CHEBI:16522"/>
    </ligand>
</feature>
<feature type="binding site" evidence="39 53">
    <location>
        <position position="317"/>
    </location>
    <ligand>
        <name>dihydrozeatin</name>
        <dbReference type="ChEBI" id="CHEBI:17874"/>
    </ligand>
</feature>
<feature type="binding site" evidence="39 52 54">
    <location>
        <position position="317"/>
    </location>
    <ligand>
        <name>trans-zeatin</name>
        <dbReference type="ChEBI" id="CHEBI:16522"/>
    </ligand>
</feature>
<feature type="binding site" evidence="41 58">
    <location>
        <position position="952"/>
    </location>
    <ligand>
        <name>Mg(2+)</name>
        <dbReference type="ChEBI" id="CHEBI:18420"/>
    </ligand>
</feature>
<feature type="binding site" evidence="41 58">
    <location>
        <position position="996"/>
    </location>
    <ligand>
        <name>Mg(2+)</name>
        <dbReference type="ChEBI" id="CHEBI:18420"/>
    </ligand>
</feature>
<feature type="binding site" evidence="41 58">
    <location>
        <position position="998"/>
    </location>
    <ligand>
        <name>Mg(2+)</name>
        <dbReference type="ChEBI" id="CHEBI:18420"/>
    </ligand>
</feature>
<feature type="modified residue" description="Phosphohistidine; by autocatalysis" evidence="3 23">
    <location>
        <position position="482"/>
    </location>
</feature>
<feature type="modified residue" description="4-aspartylphosphate" evidence="4">
    <location>
        <position position="996"/>
    </location>
</feature>
<feature type="splice variant" id="VSP_039770" description="In isoform 2." evidence="42 44 45">
    <location>
        <begin position="1"/>
        <end position="23"/>
    </location>
</feature>
<feature type="sequence variant" description="In strain: cv. Se-0." evidence="27">
    <original>S</original>
    <variation>N</variation>
    <location>
        <position position="765"/>
    </location>
</feature>
<feature type="mutagenesis site" description="Loss of activity." evidence="39">
    <original>A</original>
    <variation>L</variation>
    <location>
        <position position="225"/>
    </location>
</feature>
<feature type="mutagenesis site" description="Loss of activity." evidence="39">
    <original>A</original>
    <variation>L</variation>
    <location>
        <position position="227"/>
    </location>
</feature>
<feature type="mutagenesis site" description="Loss of activity." evidence="39">
    <original>Y</original>
    <variation>E</variation>
    <location>
        <position position="273"/>
    </location>
</feature>
<feature type="mutagenesis site" description="No effect on activity." evidence="39">
    <original>M</original>
    <variation>A</variation>
    <location>
        <position position="279"/>
    </location>
</feature>
<feature type="mutagenesis site" description="Loss of activity." evidence="39">
    <original>D</original>
    <variation>A</variation>
    <variation>E</variation>
    <variation>R</variation>
    <location>
        <position position="285"/>
    </location>
</feature>
<feature type="mutagenesis site" description="In wol-1; locked in the phosphoprotein phosphatase active form, retardation of the primary root growth with reduced cell number and exclusive xylem differentiation within the vascular tissue associated with abnormal vascular asymmetric cell divisions, impaired metaxylem and phloem differentiation, and reduced cytokinin-binding ability leading to impaired kinase activity and cytokinin-mediated activation." evidence="5 10 13 23 28 39">
    <original>T</original>
    <variation>I</variation>
    <location>
        <position position="301"/>
    </location>
</feature>
<feature type="mutagenesis site" description="Loss of activity." evidence="39">
    <original>P</original>
    <variation>V</variation>
    <location>
        <position position="303"/>
    </location>
</feature>
<feature type="mutagenesis site" description="Loss of activity." evidence="39">
    <original>F</original>
    <variation>A</variation>
    <location>
        <position position="304"/>
    </location>
</feature>
<feature type="mutagenesis site" description="Loss of activity." evidence="39">
    <original>L</original>
    <variation>A</variation>
    <location>
        <position position="306"/>
    </location>
</feature>
<feature type="mutagenesis site" description="Loss of activity." evidence="39">
    <original>L</original>
    <variation>A</variation>
    <location>
        <position position="307"/>
    </location>
</feature>
<feature type="mutagenesis site" description="No effect on activity." evidence="39">
    <original>T</original>
    <variation>A</variation>
    <location>
        <position position="317"/>
    </location>
</feature>
<feature type="mutagenesis site" description="Loss of activity." evidence="39">
    <original>G</original>
    <variation>L</variation>
    <location>
        <position position="343"/>
    </location>
</feature>
<feature type="mutagenesis site" description="Constitutively activated independently of cytokinin." evidence="28">
    <original>G</original>
    <variation>C</variation>
    <location>
        <position position="435"/>
    </location>
</feature>
<feature type="mutagenesis site" description="Constitutively activated independently of cytokinin." evidence="28">
    <original>F</original>
    <variation>S</variation>
    <location>
        <position position="436"/>
    </location>
</feature>
<feature type="mutagenesis site" description="Constitutively activated independently of cytokinin." evidence="28">
    <original>M</original>
    <variation>T</variation>
    <location>
        <position position="447"/>
    </location>
</feature>
<feature type="mutagenesis site" description="In wol-3; retardation of the primary root growth, no production of lateral roots and enhanced formation of adventitious roots associated with impaired auxin basipetal transport." evidence="21">
    <original>M</original>
    <variation>I</variation>
    <location>
        <position position="459"/>
    </location>
</feature>
<feature type="mutagenesis site" description="Constitutively activated independently of cytokinin." evidence="28">
    <original>V</original>
    <variation>A</variation>
    <location>
        <position position="471"/>
    </location>
</feature>
<feature type="mutagenesis site" description="Reduced phosphoprotein phosphatase activity." evidence="8 23">
    <original>H</original>
    <variation>Q</variation>
    <location>
        <position position="482"/>
    </location>
</feature>
<feature type="mutagenesis site" description="In cre1-1; impaired histidine-kinase receptor activity and reduced responses to cytokinins, including rapid cell proliferation and shoot formation in tissue culture, repression of sulfate uptake, retardation of the primary root growth, no production of lateral roots and enhanced formation of adventitious roots associated with impaired auxin basipetal transport, as well as reduced cell number within the vascular tissues in roots." evidence="8 11 14 21">
    <original>G</original>
    <variation>D</variation>
    <location>
        <position position="490"/>
    </location>
</feature>
<feature type="mutagenesis site" description="In cre1-6; reduced sensitivity to cytokinin." evidence="12">
    <original>G</original>
    <variation>R</variation>
    <location>
        <position position="493"/>
    </location>
</feature>
<feature type="mutagenesis site" description="Constitutively activated independently of cytokinin." evidence="28">
    <original>M</original>
    <variation>L</variation>
    <location>
        <position position="494"/>
    </location>
</feature>
<feature type="mutagenesis site" description="In wol-2/raw1; impaired metaxylem and phloem differentiation, and reduced sensitivity to cytokinins. Retardation of the primary root growth with reduced cell number and exclusive xylem differentiation within the vascular tissue associated with abnormal vascular asymmetric cell divisions, and impaired cytokinin-binding ability." evidence="13">
    <original>L</original>
    <variation>F</variation>
    <location>
        <position position="529"/>
    </location>
</feature>
<feature type="mutagenesis site" description="No histidine kinase activity, but normal phosphoprotein phosphatase activity." evidence="23">
    <original>F</original>
    <variation>L</variation>
    <location>
        <position position="708"/>
    </location>
</feature>
<feature type="mutagenesis site" description="Cytokinin-mediated autophosphorylation but impaired phosphotransfer to an HPt, abolished phosphoprotein phosphatase activity." evidence="8 23">
    <original>D</original>
    <variation>N</variation>
    <location>
        <position position="996"/>
    </location>
</feature>
<feature type="mutagenesis site" description="In cre1-4; slightly reduced sensitivity to cytokinin, and impaired cytokinin repression of several Pi starvation-responses." evidence="12">
    <original>T</original>
    <variation>I</variation>
    <location>
        <position position="1008"/>
    </location>
</feature>
<feature type="mutagenesis site" description="In cre1-9; impaired cytokinin repression of several Pi starvation-responses." evidence="12">
    <original>A</original>
    <variation>T</variation>
    <location>
        <position position="1032"/>
    </location>
</feature>
<feature type="sequence conflict" description="In Ref. 2; BAB33311." evidence="47" ref="2">
    <original>S</original>
    <variation>G</variation>
    <location>
        <position position="567"/>
    </location>
</feature>
<feature type="sequence conflict" description="In Ref. 2; BAB33311." evidence="47" ref="2">
    <original>T</original>
    <variation>A</variation>
    <location>
        <position position="1018"/>
    </location>
</feature>
<feature type="helix" evidence="59">
    <location>
        <begin position="151"/>
        <end position="193"/>
    </location>
</feature>
<feature type="turn" evidence="59">
    <location>
        <begin position="194"/>
        <end position="196"/>
    </location>
</feature>
<feature type="strand" evidence="59">
    <location>
        <begin position="197"/>
        <end position="199"/>
    </location>
</feature>
<feature type="helix" evidence="59">
    <location>
        <begin position="204"/>
        <end position="213"/>
    </location>
</feature>
<feature type="helix" evidence="59">
    <location>
        <begin position="215"/>
        <end position="217"/>
    </location>
</feature>
<feature type="strand" evidence="59">
    <location>
        <begin position="221"/>
        <end position="228"/>
    </location>
</feature>
<feature type="helix" evidence="59">
    <location>
        <begin position="232"/>
        <end position="234"/>
    </location>
</feature>
<feature type="helix" evidence="59">
    <location>
        <begin position="235"/>
        <end position="242"/>
    </location>
</feature>
<feature type="turn" evidence="59">
    <location>
        <begin position="249"/>
        <end position="251"/>
    </location>
</feature>
<feature type="strand" evidence="59">
    <location>
        <begin position="259"/>
        <end position="261"/>
    </location>
</feature>
<feature type="strand" evidence="59">
    <location>
        <begin position="263"/>
        <end position="267"/>
    </location>
</feature>
<feature type="helix" evidence="59">
    <location>
        <begin position="269"/>
        <end position="274"/>
    </location>
</feature>
<feature type="helix" evidence="59">
    <location>
        <begin position="279"/>
        <end position="281"/>
    </location>
</feature>
<feature type="helix" evidence="59">
    <location>
        <begin position="283"/>
        <end position="295"/>
    </location>
</feature>
<feature type="turn" evidence="59">
    <location>
        <begin position="307"/>
        <end position="309"/>
    </location>
</feature>
<feature type="strand" evidence="59">
    <location>
        <begin position="312"/>
        <end position="321"/>
    </location>
</feature>
<feature type="helix" evidence="59">
    <location>
        <begin position="331"/>
        <end position="336"/>
    </location>
</feature>
<feature type="strand" evidence="59">
    <location>
        <begin position="338"/>
        <end position="346"/>
    </location>
</feature>
<feature type="helix" evidence="59">
    <location>
        <begin position="348"/>
        <end position="357"/>
    </location>
</feature>
<feature type="helix" evidence="59">
    <location>
        <begin position="362"/>
        <end position="364"/>
    </location>
</feature>
<feature type="strand" evidence="59">
    <location>
        <begin position="365"/>
        <end position="371"/>
    </location>
</feature>
<feature type="strand" evidence="59">
    <location>
        <begin position="379"/>
        <end position="382"/>
    </location>
</feature>
<feature type="strand" evidence="60">
    <location>
        <begin position="385"/>
        <end position="387"/>
    </location>
</feature>
<feature type="strand" evidence="59">
    <location>
        <begin position="395"/>
        <end position="399"/>
    </location>
</feature>
<feature type="strand" evidence="59">
    <location>
        <begin position="408"/>
        <end position="414"/>
    </location>
</feature>
<feature type="turn" evidence="62">
    <location>
        <begin position="941"/>
        <end position="944"/>
    </location>
</feature>
<feature type="strand" evidence="62">
    <location>
        <begin position="946"/>
        <end position="950"/>
    </location>
</feature>
<feature type="helix" evidence="62">
    <location>
        <begin position="954"/>
        <end position="966"/>
    </location>
</feature>
<feature type="strand" evidence="62">
    <location>
        <begin position="970"/>
        <end position="976"/>
    </location>
</feature>
<feature type="helix" evidence="62">
    <location>
        <begin position="977"/>
        <end position="983"/>
    </location>
</feature>
<feature type="strand" evidence="62">
    <location>
        <begin position="991"/>
        <end position="997"/>
    </location>
</feature>
<feature type="strand" evidence="62">
    <location>
        <begin position="1000"/>
        <end position="1002"/>
    </location>
</feature>
<feature type="helix" evidence="62">
    <location>
        <begin position="1004"/>
        <end position="1022"/>
    </location>
</feature>
<feature type="strand" evidence="62">
    <location>
        <begin position="1030"/>
        <end position="1033"/>
    </location>
</feature>
<feature type="helix" evidence="62">
    <location>
        <begin position="1035"/>
        <end position="1048"/>
    </location>
</feature>
<feature type="strand" evidence="62">
    <location>
        <begin position="1052"/>
        <end position="1056"/>
    </location>
</feature>
<feature type="helix" evidence="61">
    <location>
        <begin position="1063"/>
        <end position="1065"/>
    </location>
</feature>
<name>AHK4_ARATH</name>
<comment type="function">
    <text evidence="5 6 8 9 10 11 12 13 14 15 16 17 18 19 20 21 22 23 25 26 28 29 30 31 32 34 35 36">Cytokinins (CK) receptor related to bacterial two-component regulators. Also binds the synthetic urea-type cytokinin thidiazuron, a potent defoliant and herbicide. Functions as a histidine kinase and transmits the stress signal to a downstream MAPK cascade. This protein undergoes an ATP-dependent autophosphorylation at a conserved histidine residue in the kinase core, and a phosphoryl group is then transferred to a conserved aspartate residue in the receiver domain. In the presence of cytokinin, feeds phosphate to phosphorelay-integrating histidine phosphotransfer protein (HPt) and activates subsequent cascade. In the absence of cytokinin, removes phosphate from HPt proteins, decreasing the system phosphoload. Involved in meristems establishment in seedlings. Acts as a redundant negative regulator of drought and salt stress responses, and abscisic acid (ABA) signaling in a cytokinin-dependent manner. Required to set vascular asymmetric cell divisions that establish phloem and procambium cell lines. Redundant positive regulator of cytokinin signaling that regulates many developmental processes including seed germination, cell division, seed size, chlorophyll retention during leaf senescence, root repression and shoot promotion. Can interact with isoprenoid-type cytokinins trans-zeatin (tZ and tZR), isopentenyladenine (iP), and isopentenyladenosine (iPR), the meta hydroxylated derivative of benzyladenine m-topolin, buta-2,3-dienyladenine (HA-8), penta-2,3-dienyladenine (HA-1), 4-methyl-penta-2,3-dienyladenine (HA-10), 4-hydroxy-2-butynyladenine (RM1), 2-butynyladenine (RM6), and to a lower extent, with cis-zeatin (cZ), zeatin riboside and dihydrozeatin (DZ). Together with AHK3, involved in the cytokinin-dependent responses to Pi starvation and sucrose stresses. Required for the formation of auxin-transporting vascular tissues in the hypocotyl, and primary and lateral roots, but not in adventitious roots, thus leading to auxin basipetal transport that regulates root development and branching. Involved in alkamides (e.g. N-isobutyl decanamide) and N-acylethanolamides (NAE) signaling that control meristematic activity and differentiation processes during plant development. Prevents the uptake of sulfate by mediating cytokinin-dependent down-regulation of high-affinity sulfate transporters (e.g. SULTR1;1 and SULTR1;2) expression in roots. Together with AHK2, required for growth and reproduction promotion stimulated by the endophytic fungus Piriformospora indica in a trans-zeatin-dependent manner. Required to trigger the phytotoxic effect of the snapdragon (Antirrhinum majus) flowers volatile organic compound (VOC) methyl benzoate (MB). Plays a role in the cytokinin-mediated repression of the iron uptake pathway.</text>
</comment>
<comment type="catalytic activity">
    <reaction evidence="9">
        <text>ATP + protein L-histidine = ADP + protein N-phospho-L-histidine.</text>
        <dbReference type="EC" id="2.7.13.3"/>
    </reaction>
</comment>
<comment type="catalytic activity">
    <reaction>
        <text>O-phospho-L-seryl-[protein] + H2O = L-seryl-[protein] + phosphate</text>
        <dbReference type="Rhea" id="RHEA:20629"/>
        <dbReference type="Rhea" id="RHEA-COMP:9863"/>
        <dbReference type="Rhea" id="RHEA-COMP:11604"/>
        <dbReference type="ChEBI" id="CHEBI:15377"/>
        <dbReference type="ChEBI" id="CHEBI:29999"/>
        <dbReference type="ChEBI" id="CHEBI:43474"/>
        <dbReference type="ChEBI" id="CHEBI:83421"/>
        <dbReference type="EC" id="3.1.3.16"/>
    </reaction>
</comment>
<comment type="catalytic activity">
    <reaction>
        <text>O-phospho-L-threonyl-[protein] + H2O = L-threonyl-[protein] + phosphate</text>
        <dbReference type="Rhea" id="RHEA:47004"/>
        <dbReference type="Rhea" id="RHEA-COMP:11060"/>
        <dbReference type="Rhea" id="RHEA-COMP:11605"/>
        <dbReference type="ChEBI" id="CHEBI:15377"/>
        <dbReference type="ChEBI" id="CHEBI:30013"/>
        <dbReference type="ChEBI" id="CHEBI:43474"/>
        <dbReference type="ChEBI" id="CHEBI:61977"/>
        <dbReference type="EC" id="3.1.3.16"/>
    </reaction>
</comment>
<comment type="activity regulation">
    <text evidence="8 35 37">Activated by cytokinins to initiate phosphorelay signaling. This cytokinin-mediated activation is repressed by the trans-zeatin antagonists 6-(2-hydroxy-3-methylbenzylamino)purine (PI-55) and 6-(2,5-dihydroxybenzylamino)purine (LGR-991).</text>
</comment>
<comment type="biophysicochemical properties">
    <phDependence>
        <text evidence="20 25">Optimum pH to bind cytokinin is about 7-8.5 at 0 degrees Celsius.</text>
    </phDependence>
    <temperatureDependence>
        <text evidence="20 25">Cytokinin-binding is more stable at 0 degrees Celsius than at 20 and 37 degrees Celsius.</text>
    </temperatureDependence>
</comment>
<comment type="subunit">
    <text evidence="6 24 33 39 40">Homodimer. Interacts with AHP1, AHP2, AHP3, AHP5, AHK3, AMPD, FBR12, WNK5 and At4g15630.</text>
</comment>
<comment type="interaction">
    <interactant intactId="EBI-1100775">
        <id>Q9C5U0</id>
    </interactant>
    <interactant intactId="EBI-1100653">
        <id>Q9C5U1</id>
        <label>AHK3</label>
    </interactant>
    <organismsDiffer>false</organismsDiffer>
    <experiments>2</experiments>
</comment>
<comment type="interaction">
    <interactant intactId="EBI-1100775">
        <id>Q9C5U0</id>
    </interactant>
    <interactant intactId="EBI-1807679">
        <id>O80452</id>
        <label>AMPD</label>
    </interactant>
    <organismsDiffer>false</organismsDiffer>
    <experiments>2</experiments>
</comment>
<comment type="interaction">
    <interactant intactId="EBI-1100775">
        <id>Q9C5U0</id>
    </interactant>
    <interactant intactId="EBI-1100725">
        <id>Q67XQ1</id>
        <label>At1g03430</label>
    </interactant>
    <organismsDiffer>false</organismsDiffer>
    <experiments>3</experiments>
</comment>
<comment type="interaction">
    <interactant intactId="EBI-1100775">
        <id>Q9C5U0</id>
    </interactant>
    <interactant intactId="EBI-1807704">
        <id>Q8L8Z1</id>
        <label>At4g15630</label>
    </interactant>
    <organismsDiffer>false</organismsDiffer>
    <experiments>2</experiments>
</comment>
<comment type="interaction">
    <interactant intactId="EBI-1100775">
        <id>Q9C5U0</id>
    </interactant>
    <interactant intactId="EBI-1807651">
        <id>Q9SCU5</id>
        <label>WNK5</label>
    </interactant>
    <organismsDiffer>false</organismsDiffer>
    <experiments>2</experiments>
</comment>
<comment type="subcellular location">
    <subcellularLocation>
        <location evidence="38">Endoplasmic reticulum membrane</location>
        <topology evidence="38">Multi-pass membrane protein</topology>
    </subcellularLocation>
</comment>
<comment type="alternative products">
    <event type="alternative splicing"/>
    <isoform>
        <id>Q9C5U0-1</id>
        <name>1</name>
        <name>CRE1b</name>
        <sequence type="displayed"/>
    </isoform>
    <isoform>
        <id>Q9C5U0-2</id>
        <name>2</name>
        <name>CRE1a</name>
        <sequence type="described" ref="VSP_039770"/>
    </isoform>
</comment>
<comment type="tissue specificity">
    <text evidence="5 7 15 16">Mostly expressed in roots, specifically in the vascular cylinder and pericycle, and, to a lower extent, in leaves and flowers. Present in seedlings.</text>
</comment>
<comment type="developmental stage">
    <text evidence="5 15 23">Expressed specifically in the vasculature since the early stages of embryogenesis. At the globular stage of embryogenesis, detected in the four innermost cells, which are the precursors of the vascular tissue. During the heart, torpedo, and nearly mature stages, expressed in the procambium of the cotyledon shoulders, prospective hypocotyl, and embryonic root. In seedlings, mainly localized in meristematic tissues (e.g. shoot apical meristem SAM, root tips, and growing leaf and lateral root primordia), especially in vasculature. Present in all the vasculature and the shoot apical meristem (SAM) of the adult plant. In flowers, localized in carpels and developing ovules. In the root tips, expressed in the central cylinder.</text>
</comment>
<comment type="induction">
    <text evidence="12 30">Rapidly induced by dehydration. Down-regulated by Pi starvation and induced by cytokinins.</text>
</comment>
<comment type="PTM">
    <text evidence="23">Autophosphorylated predominantly on His residues. Activation probably requires a transfer of a phosphate group between a His in the transmitter domain and an Asp of the receiver domain.</text>
</comment>
<comment type="disruption phenotype">
    <text evidence="9 12 15 16 19 21 22 23 29 30 31 36">Reduced sensitivity to cytokinin (mostly in shoots). Narrow vascular cylinder composed mainly of protoxylem cell files, with no apparent metaxylem or phloem. Hypersensitivity to ABA. Strong drought and salinity tolerance only in the presence of CK. Reduced cytokinin repression of several Pi starvation-responsive genes and increased sucrose sensitivity. More rapid germination, reduced requirement for light, and decreased far-red light sensitivity. Reduced sensitivity to N-isobutyl decanamide. Impaired benzyladenine (6-BA)-mediated repression of the iron uptake pathway. Impaired meristematic development in seedlings.</text>
</comment>
<organism>
    <name type="scientific">Arabidopsis thaliana</name>
    <name type="common">Mouse-ear cress</name>
    <dbReference type="NCBI Taxonomy" id="3702"/>
    <lineage>
        <taxon>Eukaryota</taxon>
        <taxon>Viridiplantae</taxon>
        <taxon>Streptophyta</taxon>
        <taxon>Embryophyta</taxon>
        <taxon>Tracheophyta</taxon>
        <taxon>Spermatophyta</taxon>
        <taxon>Magnoliopsida</taxon>
        <taxon>eudicotyledons</taxon>
        <taxon>Gunneridae</taxon>
        <taxon>Pentapetalae</taxon>
        <taxon>rosids</taxon>
        <taxon>malvids</taxon>
        <taxon>Brassicales</taxon>
        <taxon>Brassicaceae</taxon>
        <taxon>Camelineae</taxon>
        <taxon>Arabidopsis</taxon>
    </lineage>
</organism>
<gene>
    <name evidence="43 44" type="primary">AHK4</name>
    <name evidence="45" type="synonym">CRE1</name>
    <name type="synonym">RAW1</name>
    <name evidence="42" type="synonym">WOL</name>
    <name evidence="48" type="ordered locus">At2g01830</name>
    <name evidence="49" type="ORF">T23K3.2</name>
</gene>
<sequence length="1080" mass="120731">MRRDFVYNNNAMFNPLTTHYSSDMNWALNNHQEEEEEPRRIEISDSESLENLKSSDFYQLGGGGALNSSEKPRKIDFWRSGLMGFAKMQQQQQLQHSVAVKMNNNNNNDLMGNKKGSTFIQEHRALLPKALILWIIIVGFISSGIYQWMDDANKIRREEVLVSMCDQRARMLQDQFSVSVNHVHALAILVSTFHYHKNPSAIDQETFAEYTARTAFERPLLSGVAYAEKVVNFEREMFERQHNWVIKTMDRGEPSPVRDEYAPVIFSQDSVSYLESLDMMSGEEDRENILRARETGKAVLTSPFRLLETHHLGVVLTFPVYKSSLPENPTVEERIAATAGYLGGAFDVESLVENLLGQLAGNQAIVVHVYDITNASDPLVMYGNQDEEADRSLSHESKLDFGDPFRKHKMICRYHQKAPIPLNVLTTVPLFFAIGFLVGYILYGAAMHIVKVEDDFHEMQELKVRAEAADVAKSQFLATVSHEIRTPMNGILGMLAMLLDTELSSTQRDYAQTAQVCGKALIALINEVLDRAKIEAGKLELESVPFDIRSILDDVLSLFSEESRNKSIELAVFVSDKVPEIVKGDSGRFRQIIINLVGNSVKFTEKGHIFVKVHLAEQSKDESEPKNALNGGVSEEMIVVSKQSSYNTLSGYEAADGRNSWDSFKHLVSEEQSLSEFDISSNVRLMVSIEDTGIGIPLVAQGRVFMPFMQADSSTSRNYGGTGIGLSISKCLVELMRGQINFISRPHIGSTFWFTAVLEKCDKCSAINHMKKPNVEHLPSTFKGMKAIVVDAKPVRAAVTRYHMKRLGINVDVVTSLKTAVVAAAAFERNGSPLPTKPQLDMILVEKDSWISTEDNDSEIRLLNSRTNGNVHHKSPKLALFATNITNSEFDRAKSAGFADTVIMKPLRASMIGACLQQVLELRKTRQQHPEGSSPATLKSLLTGKKILVVDDNIVNRRVAAGALKKFGAEVVCAESGQVALGLLQIPHTFDACFMDIQMPQMDGFEATRQIRMMEKETKEKTNLEWHLPILAMTADVIHATYEECLKSGMDGYVSKPFEEENLYKSVAKSFKPNPISPSS</sequence>